<feature type="chain" id="PRO_0000113402" description="Malate dehydrogenase">
    <location>
        <begin position="1"/>
        <end position="328"/>
    </location>
</feature>
<feature type="active site" description="Proton acceptor" evidence="1">
    <location>
        <position position="189"/>
    </location>
</feature>
<feature type="binding site" evidence="1">
    <location>
        <begin position="11"/>
        <end position="17"/>
    </location>
    <ligand>
        <name>NAD(+)</name>
        <dbReference type="ChEBI" id="CHEBI:57540"/>
    </ligand>
</feature>
<feature type="binding site" evidence="1">
    <location>
        <position position="94"/>
    </location>
    <ligand>
        <name>substrate</name>
    </ligand>
</feature>
<feature type="binding site" evidence="1">
    <location>
        <position position="100"/>
    </location>
    <ligand>
        <name>substrate</name>
    </ligand>
</feature>
<feature type="binding site" evidence="1">
    <location>
        <position position="107"/>
    </location>
    <ligand>
        <name>NAD(+)</name>
        <dbReference type="ChEBI" id="CHEBI:57540"/>
    </ligand>
</feature>
<feature type="binding site" evidence="1">
    <location>
        <position position="114"/>
    </location>
    <ligand>
        <name>NAD(+)</name>
        <dbReference type="ChEBI" id="CHEBI:57540"/>
    </ligand>
</feature>
<feature type="binding site" evidence="1">
    <location>
        <begin position="131"/>
        <end position="133"/>
    </location>
    <ligand>
        <name>NAD(+)</name>
        <dbReference type="ChEBI" id="CHEBI:57540"/>
    </ligand>
</feature>
<feature type="binding site" evidence="1">
    <location>
        <position position="133"/>
    </location>
    <ligand>
        <name>substrate</name>
    </ligand>
</feature>
<feature type="binding site" evidence="1">
    <location>
        <position position="164"/>
    </location>
    <ligand>
        <name>substrate</name>
    </ligand>
</feature>
<evidence type="ECO:0000255" key="1">
    <source>
        <dbReference type="HAMAP-Rule" id="MF_01517"/>
    </source>
</evidence>
<dbReference type="EC" id="1.1.1.37" evidence="1"/>
<dbReference type="EMBL" id="AE008922">
    <property type="protein sequence ID" value="AAM40238.1"/>
    <property type="molecule type" value="Genomic_DNA"/>
</dbReference>
<dbReference type="RefSeq" id="NP_636314.1">
    <property type="nucleotide sequence ID" value="NC_003902.1"/>
</dbReference>
<dbReference type="RefSeq" id="WP_011036142.1">
    <property type="nucleotide sequence ID" value="NC_003902.1"/>
</dbReference>
<dbReference type="SMR" id="Q8PC25"/>
<dbReference type="STRING" id="190485.XCC0928"/>
<dbReference type="EnsemblBacteria" id="AAM40238">
    <property type="protein sequence ID" value="AAM40238"/>
    <property type="gene ID" value="XCC0928"/>
</dbReference>
<dbReference type="KEGG" id="xcc:XCC0928"/>
<dbReference type="PATRIC" id="fig|190485.4.peg.1000"/>
<dbReference type="eggNOG" id="COG0039">
    <property type="taxonomic scope" value="Bacteria"/>
</dbReference>
<dbReference type="HOGENOM" id="CLU_040727_2_0_6"/>
<dbReference type="OrthoDB" id="9802969at2"/>
<dbReference type="Proteomes" id="UP000001010">
    <property type="component" value="Chromosome"/>
</dbReference>
<dbReference type="GO" id="GO:0030060">
    <property type="term" value="F:L-malate dehydrogenase (NAD+) activity"/>
    <property type="evidence" value="ECO:0000318"/>
    <property type="project" value="GO_Central"/>
</dbReference>
<dbReference type="GO" id="GO:0006108">
    <property type="term" value="P:malate metabolic process"/>
    <property type="evidence" value="ECO:0000318"/>
    <property type="project" value="GO_Central"/>
</dbReference>
<dbReference type="GO" id="GO:0006734">
    <property type="term" value="P:NADH metabolic process"/>
    <property type="evidence" value="ECO:0000318"/>
    <property type="project" value="GO_Central"/>
</dbReference>
<dbReference type="GO" id="GO:0006107">
    <property type="term" value="P:oxaloacetate metabolic process"/>
    <property type="evidence" value="ECO:0000318"/>
    <property type="project" value="GO_Central"/>
</dbReference>
<dbReference type="GO" id="GO:0006099">
    <property type="term" value="P:tricarboxylic acid cycle"/>
    <property type="evidence" value="ECO:0000318"/>
    <property type="project" value="GO_Central"/>
</dbReference>
<dbReference type="CDD" id="cd01338">
    <property type="entry name" value="MDH_chloroplast-like"/>
    <property type="match status" value="1"/>
</dbReference>
<dbReference type="FunFam" id="3.40.50.720:FF:000010">
    <property type="entry name" value="Malate dehydrogenase"/>
    <property type="match status" value="1"/>
</dbReference>
<dbReference type="FunFam" id="3.90.110.10:FF:000002">
    <property type="entry name" value="Malate dehydrogenase"/>
    <property type="match status" value="1"/>
</dbReference>
<dbReference type="Gene3D" id="3.90.110.10">
    <property type="entry name" value="Lactate dehydrogenase/glycoside hydrolase, family 4, C-terminal"/>
    <property type="match status" value="1"/>
</dbReference>
<dbReference type="Gene3D" id="3.40.50.720">
    <property type="entry name" value="NAD(P)-binding Rossmann-like Domain"/>
    <property type="match status" value="1"/>
</dbReference>
<dbReference type="HAMAP" id="MF_01517">
    <property type="entry name" value="Malate_dehydrog_2"/>
    <property type="match status" value="1"/>
</dbReference>
<dbReference type="InterPro" id="IPR001557">
    <property type="entry name" value="L-lactate/malate_DH"/>
</dbReference>
<dbReference type="InterPro" id="IPR022383">
    <property type="entry name" value="Lactate/malate_DH_C"/>
</dbReference>
<dbReference type="InterPro" id="IPR001236">
    <property type="entry name" value="Lactate/malate_DH_N"/>
</dbReference>
<dbReference type="InterPro" id="IPR015955">
    <property type="entry name" value="Lactate_DH/Glyco_Ohase_4_C"/>
</dbReference>
<dbReference type="InterPro" id="IPR010945">
    <property type="entry name" value="Malate_DH_type2"/>
</dbReference>
<dbReference type="InterPro" id="IPR036291">
    <property type="entry name" value="NAD(P)-bd_dom_sf"/>
</dbReference>
<dbReference type="NCBIfam" id="TIGR01759">
    <property type="entry name" value="MalateDH-SF1"/>
    <property type="match status" value="1"/>
</dbReference>
<dbReference type="NCBIfam" id="NF003916">
    <property type="entry name" value="PRK05442.1"/>
    <property type="match status" value="1"/>
</dbReference>
<dbReference type="PANTHER" id="PTHR23382">
    <property type="entry name" value="MALATE DEHYDROGENASE"/>
    <property type="match status" value="1"/>
</dbReference>
<dbReference type="Pfam" id="PF02866">
    <property type="entry name" value="Ldh_1_C"/>
    <property type="match status" value="1"/>
</dbReference>
<dbReference type="Pfam" id="PF00056">
    <property type="entry name" value="Ldh_1_N"/>
    <property type="match status" value="1"/>
</dbReference>
<dbReference type="PIRSF" id="PIRSF000102">
    <property type="entry name" value="Lac_mal_DH"/>
    <property type="match status" value="1"/>
</dbReference>
<dbReference type="SUPFAM" id="SSF56327">
    <property type="entry name" value="LDH C-terminal domain-like"/>
    <property type="match status" value="1"/>
</dbReference>
<dbReference type="SUPFAM" id="SSF51735">
    <property type="entry name" value="NAD(P)-binding Rossmann-fold domains"/>
    <property type="match status" value="1"/>
</dbReference>
<reference key="1">
    <citation type="journal article" date="2002" name="Nature">
        <title>Comparison of the genomes of two Xanthomonas pathogens with differing host specificities.</title>
        <authorList>
            <person name="da Silva A.C.R."/>
            <person name="Ferro J.A."/>
            <person name="Reinach F.C."/>
            <person name="Farah C.S."/>
            <person name="Furlan L.R."/>
            <person name="Quaggio R.B."/>
            <person name="Monteiro-Vitorello C.B."/>
            <person name="Van Sluys M.A."/>
            <person name="Almeida N.F. Jr."/>
            <person name="Alves L.M.C."/>
            <person name="do Amaral A.M."/>
            <person name="Bertolini M.C."/>
            <person name="Camargo L.E.A."/>
            <person name="Camarotte G."/>
            <person name="Cannavan F."/>
            <person name="Cardozo J."/>
            <person name="Chambergo F."/>
            <person name="Ciapina L.P."/>
            <person name="Cicarelli R.M.B."/>
            <person name="Coutinho L.L."/>
            <person name="Cursino-Santos J.R."/>
            <person name="El-Dorry H."/>
            <person name="Faria J.B."/>
            <person name="Ferreira A.J.S."/>
            <person name="Ferreira R.C.C."/>
            <person name="Ferro M.I.T."/>
            <person name="Formighieri E.F."/>
            <person name="Franco M.C."/>
            <person name="Greggio C.C."/>
            <person name="Gruber A."/>
            <person name="Katsuyama A.M."/>
            <person name="Kishi L.T."/>
            <person name="Leite R.P."/>
            <person name="Lemos E.G.M."/>
            <person name="Lemos M.V.F."/>
            <person name="Locali E.C."/>
            <person name="Machado M.A."/>
            <person name="Madeira A.M.B.N."/>
            <person name="Martinez-Rossi N.M."/>
            <person name="Martins E.C."/>
            <person name="Meidanis J."/>
            <person name="Menck C.F.M."/>
            <person name="Miyaki C.Y."/>
            <person name="Moon D.H."/>
            <person name="Moreira L.M."/>
            <person name="Novo M.T.M."/>
            <person name="Okura V.K."/>
            <person name="Oliveira M.C."/>
            <person name="Oliveira V.R."/>
            <person name="Pereira H.A."/>
            <person name="Rossi A."/>
            <person name="Sena J.A.D."/>
            <person name="Silva C."/>
            <person name="de Souza R.F."/>
            <person name="Spinola L.A.F."/>
            <person name="Takita M.A."/>
            <person name="Tamura R.E."/>
            <person name="Teixeira E.C."/>
            <person name="Tezza R.I.D."/>
            <person name="Trindade dos Santos M."/>
            <person name="Truffi D."/>
            <person name="Tsai S.M."/>
            <person name="White F.F."/>
            <person name="Setubal J.C."/>
            <person name="Kitajima J.P."/>
        </authorList>
    </citation>
    <scope>NUCLEOTIDE SEQUENCE [LARGE SCALE GENOMIC DNA]</scope>
    <source>
        <strain>ATCC 33913 / DSM 3586 / NCPPB 528 / LMG 568 / P 25</strain>
    </source>
</reference>
<comment type="function">
    <text evidence="1">Catalyzes the reversible oxidation of malate to oxaloacetate.</text>
</comment>
<comment type="catalytic activity">
    <reaction evidence="1">
        <text>(S)-malate + NAD(+) = oxaloacetate + NADH + H(+)</text>
        <dbReference type="Rhea" id="RHEA:21432"/>
        <dbReference type="ChEBI" id="CHEBI:15378"/>
        <dbReference type="ChEBI" id="CHEBI:15589"/>
        <dbReference type="ChEBI" id="CHEBI:16452"/>
        <dbReference type="ChEBI" id="CHEBI:57540"/>
        <dbReference type="ChEBI" id="CHEBI:57945"/>
        <dbReference type="EC" id="1.1.1.37"/>
    </reaction>
</comment>
<comment type="similarity">
    <text evidence="1">Belongs to the LDH/MDH superfamily. MDH type 2 family.</text>
</comment>
<sequence length="328" mass="34935">MKAPVRVAVTGAAGQIGYALLFRIASGEMLGKDQPVILQLLELSNEKAQAALKGVMMELEDCAFPLLAGMVGTDDAEVAFKDIDVALLVGARPRGPGMERKDLLLENAKIFTAQGAALNKVAKRDVKVLVVGNPANTNAYIAMKSAPDLNPKNFTAMLRLDHNRALSQLSLKLGKPVGGIEKLVVWGNHSPTMYPDYRFATSDGASIGDAINDQEWNAGTFIPTVGKRGAAIIEARGLSSAASAANAAIDHVRDWVLGSNGKWVTMGVPSDGSYGIPEGVIFGFPVTTENGQYTLVKDLPIDDFSQKYIDKTLAELEEERSGVSHLLG</sequence>
<proteinExistence type="inferred from homology"/>
<name>MDH_XANCP</name>
<organism>
    <name type="scientific">Xanthomonas campestris pv. campestris (strain ATCC 33913 / DSM 3586 / NCPPB 528 / LMG 568 / P 25)</name>
    <dbReference type="NCBI Taxonomy" id="190485"/>
    <lineage>
        <taxon>Bacteria</taxon>
        <taxon>Pseudomonadati</taxon>
        <taxon>Pseudomonadota</taxon>
        <taxon>Gammaproteobacteria</taxon>
        <taxon>Lysobacterales</taxon>
        <taxon>Lysobacteraceae</taxon>
        <taxon>Xanthomonas</taxon>
    </lineage>
</organism>
<protein>
    <recommendedName>
        <fullName evidence="1">Malate dehydrogenase</fullName>
        <ecNumber evidence="1">1.1.1.37</ecNumber>
    </recommendedName>
</protein>
<gene>
    <name evidence="1" type="primary">mdh</name>
    <name type="ordered locus">XCC0928</name>
</gene>
<accession>Q8PC25</accession>
<keyword id="KW-0520">NAD</keyword>
<keyword id="KW-0560">Oxidoreductase</keyword>
<keyword id="KW-1185">Reference proteome</keyword>
<keyword id="KW-0816">Tricarboxylic acid cycle</keyword>